<name>Y2680_SINMW</name>
<feature type="chain" id="PRO_1000046969" description="UPF0335 protein Smed_2680">
    <location>
        <begin position="1"/>
        <end position="90"/>
    </location>
</feature>
<proteinExistence type="inferred from homology"/>
<gene>
    <name type="ordered locus">Smed_2680</name>
</gene>
<comment type="similarity">
    <text evidence="1">Belongs to the UPF0335 family.</text>
</comment>
<reference key="1">
    <citation type="submission" date="2007-06" db="EMBL/GenBank/DDBJ databases">
        <title>Complete sequence of Sinorhizobium medicae WSM419 chromosome.</title>
        <authorList>
            <consortium name="US DOE Joint Genome Institute"/>
            <person name="Copeland A."/>
            <person name="Lucas S."/>
            <person name="Lapidus A."/>
            <person name="Barry K."/>
            <person name="Glavina del Rio T."/>
            <person name="Dalin E."/>
            <person name="Tice H."/>
            <person name="Pitluck S."/>
            <person name="Chain P."/>
            <person name="Malfatti S."/>
            <person name="Shin M."/>
            <person name="Vergez L."/>
            <person name="Schmutz J."/>
            <person name="Larimer F."/>
            <person name="Land M."/>
            <person name="Hauser L."/>
            <person name="Kyrpides N."/>
            <person name="Mikhailova N."/>
            <person name="Reeve W.G."/>
            <person name="Richardson P."/>
        </authorList>
    </citation>
    <scope>NUCLEOTIDE SEQUENCE [LARGE SCALE GENOMIC DNA]</scope>
    <source>
        <strain>WSM419</strain>
    </source>
</reference>
<accession>A6UCY0</accession>
<evidence type="ECO:0000255" key="1">
    <source>
        <dbReference type="HAMAP-Rule" id="MF_00797"/>
    </source>
</evidence>
<dbReference type="EMBL" id="CP000738">
    <property type="protein sequence ID" value="ABR61510.1"/>
    <property type="molecule type" value="Genomic_DNA"/>
</dbReference>
<dbReference type="RefSeq" id="WP_012066896.1">
    <property type="nucleotide sequence ID" value="NC_009636.1"/>
</dbReference>
<dbReference type="RefSeq" id="YP_001328345.1">
    <property type="nucleotide sequence ID" value="NC_009636.1"/>
</dbReference>
<dbReference type="SMR" id="A6UCY0"/>
<dbReference type="STRING" id="366394.Smed_2680"/>
<dbReference type="KEGG" id="smd:Smed_2680"/>
<dbReference type="PATRIC" id="fig|366394.8.peg.5881"/>
<dbReference type="eggNOG" id="COG3750">
    <property type="taxonomic scope" value="Bacteria"/>
</dbReference>
<dbReference type="HOGENOM" id="CLU_158651_3_0_5"/>
<dbReference type="OrthoDB" id="9813793at2"/>
<dbReference type="Proteomes" id="UP000001108">
    <property type="component" value="Chromosome"/>
</dbReference>
<dbReference type="GO" id="GO:0003677">
    <property type="term" value="F:DNA binding"/>
    <property type="evidence" value="ECO:0007669"/>
    <property type="project" value="InterPro"/>
</dbReference>
<dbReference type="HAMAP" id="MF_00797">
    <property type="entry name" value="UPF0335"/>
    <property type="match status" value="1"/>
</dbReference>
<dbReference type="InterPro" id="IPR018753">
    <property type="entry name" value="GapR-like"/>
</dbReference>
<dbReference type="InterPro" id="IPR046367">
    <property type="entry name" value="GapR-like_DNA-bd"/>
</dbReference>
<dbReference type="NCBIfam" id="NF010247">
    <property type="entry name" value="PRK13694.1"/>
    <property type="match status" value="1"/>
</dbReference>
<dbReference type="Pfam" id="PF10073">
    <property type="entry name" value="GapR_DNA-bd"/>
    <property type="match status" value="1"/>
</dbReference>
<organism>
    <name type="scientific">Sinorhizobium medicae (strain WSM419)</name>
    <name type="common">Ensifer medicae</name>
    <dbReference type="NCBI Taxonomy" id="366394"/>
    <lineage>
        <taxon>Bacteria</taxon>
        <taxon>Pseudomonadati</taxon>
        <taxon>Pseudomonadota</taxon>
        <taxon>Alphaproteobacteria</taxon>
        <taxon>Hyphomicrobiales</taxon>
        <taxon>Rhizobiaceae</taxon>
        <taxon>Sinorhizobium/Ensifer group</taxon>
        <taxon>Sinorhizobium</taxon>
    </lineage>
</organism>
<protein>
    <recommendedName>
        <fullName evidence="1">UPF0335 protein Smed_2680</fullName>
    </recommendedName>
</protein>
<sequence>MSDAHGIARDQLRAFIERIERLEEEKKTIADDIKDVYGEAKSMGFDAKILRKVISIRKQDADERMEQEAILDTYLQALGMIPAAETEDAA</sequence>